<dbReference type="EC" id="3.5.4.13" evidence="1"/>
<dbReference type="EMBL" id="CP001173">
    <property type="protein sequence ID" value="ACI27778.1"/>
    <property type="molecule type" value="Genomic_DNA"/>
</dbReference>
<dbReference type="RefSeq" id="WP_000523102.1">
    <property type="nucleotide sequence ID" value="NC_011333.1"/>
</dbReference>
<dbReference type="SMR" id="B5Z879"/>
<dbReference type="KEGG" id="hpg:HPG27_1025"/>
<dbReference type="HOGENOM" id="CLU_087476_4_0_7"/>
<dbReference type="UniPathway" id="UPA00610">
    <property type="reaction ID" value="UER00665"/>
</dbReference>
<dbReference type="Proteomes" id="UP000001735">
    <property type="component" value="Chromosome"/>
</dbReference>
<dbReference type="GO" id="GO:0008829">
    <property type="term" value="F:dCTP deaminase activity"/>
    <property type="evidence" value="ECO:0007669"/>
    <property type="project" value="UniProtKB-UniRule"/>
</dbReference>
<dbReference type="GO" id="GO:0000166">
    <property type="term" value="F:nucleotide binding"/>
    <property type="evidence" value="ECO:0007669"/>
    <property type="project" value="UniProtKB-KW"/>
</dbReference>
<dbReference type="GO" id="GO:0006226">
    <property type="term" value="P:dUMP biosynthetic process"/>
    <property type="evidence" value="ECO:0007669"/>
    <property type="project" value="UniProtKB-UniPathway"/>
</dbReference>
<dbReference type="GO" id="GO:0006229">
    <property type="term" value="P:dUTP biosynthetic process"/>
    <property type="evidence" value="ECO:0007669"/>
    <property type="project" value="UniProtKB-UniRule"/>
</dbReference>
<dbReference type="GO" id="GO:0015949">
    <property type="term" value="P:nucleobase-containing small molecule interconversion"/>
    <property type="evidence" value="ECO:0007669"/>
    <property type="project" value="TreeGrafter"/>
</dbReference>
<dbReference type="CDD" id="cd07557">
    <property type="entry name" value="trimeric_dUTPase"/>
    <property type="match status" value="1"/>
</dbReference>
<dbReference type="FunFam" id="2.70.40.10:FF:000006">
    <property type="entry name" value="dCTP deaminase"/>
    <property type="match status" value="1"/>
</dbReference>
<dbReference type="Gene3D" id="2.70.40.10">
    <property type="match status" value="1"/>
</dbReference>
<dbReference type="HAMAP" id="MF_00146">
    <property type="entry name" value="dCTP_deaminase"/>
    <property type="match status" value="1"/>
</dbReference>
<dbReference type="InterPro" id="IPR011962">
    <property type="entry name" value="dCTP_deaminase"/>
</dbReference>
<dbReference type="InterPro" id="IPR036157">
    <property type="entry name" value="dUTPase-like_sf"/>
</dbReference>
<dbReference type="InterPro" id="IPR033704">
    <property type="entry name" value="dUTPase_trimeric"/>
</dbReference>
<dbReference type="NCBIfam" id="TIGR02274">
    <property type="entry name" value="dCTP_deam"/>
    <property type="match status" value="1"/>
</dbReference>
<dbReference type="PANTHER" id="PTHR42680">
    <property type="entry name" value="DCTP DEAMINASE"/>
    <property type="match status" value="1"/>
</dbReference>
<dbReference type="PANTHER" id="PTHR42680:SF3">
    <property type="entry name" value="DCTP DEAMINASE"/>
    <property type="match status" value="1"/>
</dbReference>
<dbReference type="Pfam" id="PF22769">
    <property type="entry name" value="DCD"/>
    <property type="match status" value="1"/>
</dbReference>
<dbReference type="SUPFAM" id="SSF51283">
    <property type="entry name" value="dUTPase-like"/>
    <property type="match status" value="1"/>
</dbReference>
<name>DCD_HELPG</name>
<feature type="chain" id="PRO_1000096430" description="dCTP deaminase">
    <location>
        <begin position="1"/>
        <end position="188"/>
    </location>
</feature>
<feature type="active site" description="Proton donor/acceptor" evidence="1">
    <location>
        <position position="135"/>
    </location>
</feature>
<feature type="binding site" evidence="1">
    <location>
        <begin position="109"/>
        <end position="114"/>
    </location>
    <ligand>
        <name>dCTP</name>
        <dbReference type="ChEBI" id="CHEBI:61481"/>
    </ligand>
</feature>
<feature type="binding site" evidence="1">
    <location>
        <position position="154"/>
    </location>
    <ligand>
        <name>dCTP</name>
        <dbReference type="ChEBI" id="CHEBI:61481"/>
    </ligand>
</feature>
<feature type="binding site" evidence="1">
    <location>
        <position position="168"/>
    </location>
    <ligand>
        <name>dCTP</name>
        <dbReference type="ChEBI" id="CHEBI:61481"/>
    </ligand>
</feature>
<feature type="binding site" evidence="1">
    <location>
        <position position="178"/>
    </location>
    <ligand>
        <name>dCTP</name>
        <dbReference type="ChEBI" id="CHEBI:61481"/>
    </ligand>
</feature>
<comment type="function">
    <text evidence="1">Catalyzes the deamination of dCTP to dUTP.</text>
</comment>
<comment type="catalytic activity">
    <reaction evidence="1">
        <text>dCTP + H2O + H(+) = dUTP + NH4(+)</text>
        <dbReference type="Rhea" id="RHEA:22680"/>
        <dbReference type="ChEBI" id="CHEBI:15377"/>
        <dbReference type="ChEBI" id="CHEBI:15378"/>
        <dbReference type="ChEBI" id="CHEBI:28938"/>
        <dbReference type="ChEBI" id="CHEBI:61481"/>
        <dbReference type="ChEBI" id="CHEBI:61555"/>
        <dbReference type="EC" id="3.5.4.13"/>
    </reaction>
</comment>
<comment type="pathway">
    <text evidence="1">Pyrimidine metabolism; dUMP biosynthesis; dUMP from dCTP (dUTP route): step 1/2.</text>
</comment>
<comment type="subunit">
    <text evidence="1">Homotrimer.</text>
</comment>
<comment type="similarity">
    <text evidence="1">Belongs to the dCTP deaminase family.</text>
</comment>
<protein>
    <recommendedName>
        <fullName evidence="1">dCTP deaminase</fullName>
        <ecNumber evidence="1">3.5.4.13</ecNumber>
    </recommendedName>
    <alternativeName>
        <fullName evidence="1">Deoxycytidine triphosphate deaminase</fullName>
    </alternativeName>
</protein>
<sequence length="188" mass="20888">MGLKADSWIKKMSLEHGMISPFCEKQVGKNVISYGLSSYGYDIRVGSEFMLFDNKNALIDPKNFDPNNATKIDASKEGFFILPANAFALAHTIEYFKMPKDTLAICLGKSTYARCGIIVNVTPFEPEFEGYITIEISNTTNLPAKVYANEGIAQVVFLQGDEMCEQSYKDRGGKYQGQVGITLPKILK</sequence>
<reference key="1">
    <citation type="journal article" date="2009" name="J. Bacteriol.">
        <title>The complete genome sequence of Helicobacter pylori strain G27.</title>
        <authorList>
            <person name="Baltrus D.A."/>
            <person name="Amieva M.R."/>
            <person name="Covacci A."/>
            <person name="Lowe T.M."/>
            <person name="Merrell D.S."/>
            <person name="Ottemann K.M."/>
            <person name="Stein M."/>
            <person name="Salama N.R."/>
            <person name="Guillemin K."/>
        </authorList>
    </citation>
    <scope>NUCLEOTIDE SEQUENCE [LARGE SCALE GENOMIC DNA]</scope>
    <source>
        <strain>G27</strain>
    </source>
</reference>
<proteinExistence type="inferred from homology"/>
<gene>
    <name evidence="1" type="primary">dcd</name>
    <name type="ordered locus">HPG27_1025</name>
</gene>
<organism>
    <name type="scientific">Helicobacter pylori (strain G27)</name>
    <dbReference type="NCBI Taxonomy" id="563041"/>
    <lineage>
        <taxon>Bacteria</taxon>
        <taxon>Pseudomonadati</taxon>
        <taxon>Campylobacterota</taxon>
        <taxon>Epsilonproteobacteria</taxon>
        <taxon>Campylobacterales</taxon>
        <taxon>Helicobacteraceae</taxon>
        <taxon>Helicobacter</taxon>
    </lineage>
</organism>
<evidence type="ECO:0000255" key="1">
    <source>
        <dbReference type="HAMAP-Rule" id="MF_00146"/>
    </source>
</evidence>
<accession>B5Z879</accession>
<keyword id="KW-0378">Hydrolase</keyword>
<keyword id="KW-0546">Nucleotide metabolism</keyword>
<keyword id="KW-0547">Nucleotide-binding</keyword>
<keyword id="KW-1185">Reference proteome</keyword>